<evidence type="ECO:0000255" key="1">
    <source>
        <dbReference type="HAMAP-Rule" id="MF_00918"/>
    </source>
</evidence>
<name>Y266_STRPD</name>
<accession>Q1JIJ2</accession>
<comment type="subcellular location">
    <subcellularLocation>
        <location evidence="1">Cytoplasm</location>
    </subcellularLocation>
</comment>
<comment type="similarity">
    <text evidence="1">Belongs to the TACO1 family. YeeN subfamily.</text>
</comment>
<proteinExistence type="inferred from homology"/>
<reference key="1">
    <citation type="journal article" date="2006" name="Proc. Natl. Acad. Sci. U.S.A.">
        <title>Molecular genetic anatomy of inter- and intraserotype variation in the human bacterial pathogen group A Streptococcus.</title>
        <authorList>
            <person name="Beres S.B."/>
            <person name="Richter E.W."/>
            <person name="Nagiec M.J."/>
            <person name="Sumby P."/>
            <person name="Porcella S.F."/>
            <person name="DeLeo F.R."/>
            <person name="Musser J.M."/>
        </authorList>
    </citation>
    <scope>NUCLEOTIDE SEQUENCE [LARGE SCALE GENOMIC DNA]</scope>
    <source>
        <strain>MGAS10270</strain>
    </source>
</reference>
<dbReference type="EMBL" id="CP000260">
    <property type="protein sequence ID" value="ABF33331.1"/>
    <property type="molecule type" value="Genomic_DNA"/>
</dbReference>
<dbReference type="RefSeq" id="WP_002985979.1">
    <property type="nucleotide sequence ID" value="NZ_CVUH01000002.1"/>
</dbReference>
<dbReference type="SMR" id="Q1JIJ2"/>
<dbReference type="KEGG" id="sph:MGAS10270_Spy0266"/>
<dbReference type="HOGENOM" id="CLU_062974_2_0_9"/>
<dbReference type="Proteomes" id="UP000002436">
    <property type="component" value="Chromosome"/>
</dbReference>
<dbReference type="GO" id="GO:0005829">
    <property type="term" value="C:cytosol"/>
    <property type="evidence" value="ECO:0007669"/>
    <property type="project" value="TreeGrafter"/>
</dbReference>
<dbReference type="GO" id="GO:0003677">
    <property type="term" value="F:DNA binding"/>
    <property type="evidence" value="ECO:0007669"/>
    <property type="project" value="UniProtKB-UniRule"/>
</dbReference>
<dbReference type="GO" id="GO:0006355">
    <property type="term" value="P:regulation of DNA-templated transcription"/>
    <property type="evidence" value="ECO:0007669"/>
    <property type="project" value="UniProtKB-UniRule"/>
</dbReference>
<dbReference type="FunFam" id="1.10.10.200:FF:000003">
    <property type="entry name" value="Probable transcriptional regulatory protein YeeN"/>
    <property type="match status" value="1"/>
</dbReference>
<dbReference type="FunFam" id="3.30.70.980:FF:000004">
    <property type="entry name" value="Probable transcriptional regulatory protein YeeN"/>
    <property type="match status" value="1"/>
</dbReference>
<dbReference type="Gene3D" id="1.10.10.200">
    <property type="match status" value="1"/>
</dbReference>
<dbReference type="Gene3D" id="3.30.70.980">
    <property type="match status" value="2"/>
</dbReference>
<dbReference type="HAMAP" id="MF_00693">
    <property type="entry name" value="Transcrip_reg_TACO1"/>
    <property type="match status" value="1"/>
</dbReference>
<dbReference type="HAMAP" id="MF_00918">
    <property type="entry name" value="Transcrip_reg_TACO1_YeeN"/>
    <property type="match status" value="1"/>
</dbReference>
<dbReference type="InterPro" id="IPR017856">
    <property type="entry name" value="Integrase-like_N"/>
</dbReference>
<dbReference type="InterPro" id="IPR048300">
    <property type="entry name" value="TACO1_YebC-like_2nd/3rd_dom"/>
</dbReference>
<dbReference type="InterPro" id="IPR049083">
    <property type="entry name" value="TACO1_YebC_N"/>
</dbReference>
<dbReference type="InterPro" id="IPR002876">
    <property type="entry name" value="Transcrip_reg_TACO1-like"/>
</dbReference>
<dbReference type="InterPro" id="IPR026564">
    <property type="entry name" value="Transcrip_reg_TACO1-like_dom3"/>
</dbReference>
<dbReference type="InterPro" id="IPR026562">
    <property type="entry name" value="Transcrip_reg_TACO1_YeeN"/>
</dbReference>
<dbReference type="InterPro" id="IPR029072">
    <property type="entry name" value="YebC-like"/>
</dbReference>
<dbReference type="NCBIfam" id="NF001030">
    <property type="entry name" value="PRK00110.1"/>
    <property type="match status" value="1"/>
</dbReference>
<dbReference type="NCBIfam" id="NF009044">
    <property type="entry name" value="PRK12378.1"/>
    <property type="match status" value="1"/>
</dbReference>
<dbReference type="NCBIfam" id="TIGR01033">
    <property type="entry name" value="YebC/PmpR family DNA-binding transcriptional regulator"/>
    <property type="match status" value="1"/>
</dbReference>
<dbReference type="PANTHER" id="PTHR12532">
    <property type="entry name" value="TRANSLATIONAL ACTIVATOR OF CYTOCHROME C OXIDASE 1"/>
    <property type="match status" value="1"/>
</dbReference>
<dbReference type="PANTHER" id="PTHR12532:SF0">
    <property type="entry name" value="TRANSLATIONAL ACTIVATOR OF CYTOCHROME C OXIDASE 1"/>
    <property type="match status" value="1"/>
</dbReference>
<dbReference type="Pfam" id="PF20772">
    <property type="entry name" value="TACO1_YebC_N"/>
    <property type="match status" value="1"/>
</dbReference>
<dbReference type="Pfam" id="PF01709">
    <property type="entry name" value="Transcrip_reg"/>
    <property type="match status" value="1"/>
</dbReference>
<dbReference type="SUPFAM" id="SSF75625">
    <property type="entry name" value="YebC-like"/>
    <property type="match status" value="1"/>
</dbReference>
<keyword id="KW-0963">Cytoplasm</keyword>
<keyword id="KW-0238">DNA-binding</keyword>
<keyword id="KW-0804">Transcription</keyword>
<keyword id="KW-0805">Transcription regulation</keyword>
<protein>
    <recommendedName>
        <fullName evidence="1">Probable transcriptional regulatory protein MGAS10270_Spy0266</fullName>
    </recommendedName>
</protein>
<gene>
    <name type="ordered locus">MGAS10270_Spy0266</name>
</gene>
<sequence length="238" mass="25888">MGRKWANIVAKKTAKDGATSKVYAKFGVEIYVAAKQGEPDPELNTALKFVIDRAKQAQVPKHVIDKAIDKAKGNTDETFVEGRYEGFGPNGSMIIVDTLTSNVNRTAANVRTAYGKNGGNMGASGSVSYLFDKKGVIVFAGDDADSVFEQLLEADVDVDDVEAEEGTITVYTAPTDLHKGIQALRDNGVEEFQVTELEMIPQSEVVLEGDDLETFEKLIDALESDDDVQKVYHNVADF</sequence>
<feature type="chain" id="PRO_0000257144" description="Probable transcriptional regulatory protein MGAS10270_Spy0266">
    <location>
        <begin position="1"/>
        <end position="238"/>
    </location>
</feature>
<organism>
    <name type="scientific">Streptococcus pyogenes serotype M2 (strain MGAS10270)</name>
    <dbReference type="NCBI Taxonomy" id="370552"/>
    <lineage>
        <taxon>Bacteria</taxon>
        <taxon>Bacillati</taxon>
        <taxon>Bacillota</taxon>
        <taxon>Bacilli</taxon>
        <taxon>Lactobacillales</taxon>
        <taxon>Streptococcaceae</taxon>
        <taxon>Streptococcus</taxon>
    </lineage>
</organism>